<gene>
    <name type="primary">HOG1</name>
</gene>
<sequence>GRGNSIKHLRHENIISLLDVFISPGEDIYFITELLGTDLHRLLSSRPLERQFVQYFLYQMLRALKFVHPAGVVHRDLKPSNILINENCDLKICDFGLARLQDPQMTGYVSTRYYRAPEIMLTWQEYDSAVDIWSVGCIFAEMIDGRPIFPGKDHVHQLTVITELLGSPPEDVINTITSENTRRFVDALPKREKIPFQQRFPNASEEEIDLLEKMLDFNPKERITAADAIQHPYLAPYHDPSDEPVANERFDWSFNDADLPVDQWKVMMYTEILITSEF</sequence>
<reference key="1">
    <citation type="submission" date="2006-12" db="EMBL/GenBank/DDBJ databases">
        <title>Partial genomic DNA sequence of a putative MAP kinase HOG1 (WsHog1p) from Wallemia sebi.</title>
        <authorList>
            <person name="Vaupotic T."/>
            <person name="Plemenitas A."/>
        </authorList>
    </citation>
    <scope>NUCLEOTIDE SEQUENCE [GENOMIC DNA]</scope>
    <source>
        <strain>EXF-757</strain>
    </source>
</reference>
<proteinExistence type="inferred from homology"/>
<accession>A3EZ54</accession>
<evidence type="ECO:0000250" key="1"/>
<evidence type="ECO:0000250" key="2">
    <source>
        <dbReference type="UniProtKB" id="P32485"/>
    </source>
</evidence>
<evidence type="ECO:0000250" key="3">
    <source>
        <dbReference type="UniProtKB" id="Q16539"/>
    </source>
</evidence>
<evidence type="ECO:0000250" key="4">
    <source>
        <dbReference type="UniProtKB" id="Q4WSF6"/>
    </source>
</evidence>
<evidence type="ECO:0000255" key="5">
    <source>
        <dbReference type="PROSITE-ProRule" id="PRU00159"/>
    </source>
</evidence>
<keyword id="KW-0010">Activator</keyword>
<keyword id="KW-0067">ATP-binding</keyword>
<keyword id="KW-0963">Cytoplasm</keyword>
<keyword id="KW-0418">Kinase</keyword>
<keyword id="KW-0547">Nucleotide-binding</keyword>
<keyword id="KW-0539">Nucleus</keyword>
<keyword id="KW-0597">Phosphoprotein</keyword>
<keyword id="KW-0723">Serine/threonine-protein kinase</keyword>
<keyword id="KW-0804">Transcription</keyword>
<keyword id="KW-0805">Transcription regulation</keyword>
<keyword id="KW-0808">Transferase</keyword>
<name>HOG1_WALSE</name>
<comment type="function">
    <text evidence="4">Proline-directed serine/threonine-protein kinase involved in a signal transduction pathway that is activated by changes in the osmolarity of the extracellular environment. Controls osmotic regulation of transcription of target genes.</text>
</comment>
<comment type="catalytic activity">
    <reaction evidence="2">
        <text>L-seryl-[protein] + ATP = O-phospho-L-seryl-[protein] + ADP + H(+)</text>
        <dbReference type="Rhea" id="RHEA:17989"/>
        <dbReference type="Rhea" id="RHEA-COMP:9863"/>
        <dbReference type="Rhea" id="RHEA-COMP:11604"/>
        <dbReference type="ChEBI" id="CHEBI:15378"/>
        <dbReference type="ChEBI" id="CHEBI:29999"/>
        <dbReference type="ChEBI" id="CHEBI:30616"/>
        <dbReference type="ChEBI" id="CHEBI:83421"/>
        <dbReference type="ChEBI" id="CHEBI:456216"/>
        <dbReference type="EC" id="2.7.11.24"/>
    </reaction>
    <physiologicalReaction direction="left-to-right" evidence="2">
        <dbReference type="Rhea" id="RHEA:17990"/>
    </physiologicalReaction>
</comment>
<comment type="catalytic activity">
    <reaction evidence="2">
        <text>L-threonyl-[protein] + ATP = O-phospho-L-threonyl-[protein] + ADP + H(+)</text>
        <dbReference type="Rhea" id="RHEA:46608"/>
        <dbReference type="Rhea" id="RHEA-COMP:11060"/>
        <dbReference type="Rhea" id="RHEA-COMP:11605"/>
        <dbReference type="ChEBI" id="CHEBI:15378"/>
        <dbReference type="ChEBI" id="CHEBI:30013"/>
        <dbReference type="ChEBI" id="CHEBI:30616"/>
        <dbReference type="ChEBI" id="CHEBI:61977"/>
        <dbReference type="ChEBI" id="CHEBI:456216"/>
        <dbReference type="EC" id="2.7.11.24"/>
    </reaction>
    <physiologicalReaction direction="left-to-right" evidence="2">
        <dbReference type="Rhea" id="RHEA:46609"/>
    </physiologicalReaction>
</comment>
<comment type="cofactor">
    <cofactor evidence="3">
        <name>Mg(2+)</name>
        <dbReference type="ChEBI" id="CHEBI:18420"/>
    </cofactor>
</comment>
<comment type="activity regulation">
    <text evidence="1">Activated by tyrosine and threonine phosphorylation.</text>
</comment>
<comment type="subcellular location">
    <subcellularLocation>
        <location evidence="1">Cytoplasm</location>
    </subcellularLocation>
    <subcellularLocation>
        <location evidence="1">Nucleus</location>
    </subcellularLocation>
</comment>
<comment type="domain">
    <text>The TXY motif contains the threonine and tyrosine residues whose phosphorylation activates the MAP kinases.</text>
</comment>
<comment type="PTM">
    <text evidence="1">Dually phosphorylated on Thr-106 and Tyr-108, which activates the enzyme.</text>
</comment>
<comment type="similarity">
    <text evidence="5">Belongs to the protein kinase superfamily. Ser/Thr protein kinase family. MAP kinase subfamily. HOG1 sub-subfamily.</text>
</comment>
<protein>
    <recommendedName>
        <fullName>Mitogen-activated protein kinase HOG1</fullName>
        <shortName>MAP kinase HOG1</shortName>
        <ecNumber evidence="2">2.7.11.24</ecNumber>
    </recommendedName>
    <alternativeName>
        <fullName>WsHog1</fullName>
    </alternativeName>
</protein>
<organism>
    <name type="scientific">Wallemia sebi</name>
    <dbReference type="NCBI Taxonomy" id="148960"/>
    <lineage>
        <taxon>Eukaryota</taxon>
        <taxon>Fungi</taxon>
        <taxon>Dikarya</taxon>
        <taxon>Basidiomycota</taxon>
        <taxon>Wallemiomycotina</taxon>
        <taxon>Wallemiomycetes</taxon>
        <taxon>Wallemiales</taxon>
        <taxon>Wallemiaceae</taxon>
        <taxon>Wallemia</taxon>
    </lineage>
</organism>
<feature type="chain" id="PRO_0000289708" description="Mitogen-activated protein kinase HOG1">
    <location>
        <begin position="1" status="less than"/>
        <end position="278" status="greater than"/>
    </location>
</feature>
<feature type="domain" description="Protein kinase" evidence="5">
    <location>
        <begin position="1" status="less than"/>
        <end position="234"/>
    </location>
</feature>
<feature type="short sequence motif" description="TXY">
    <location>
        <begin position="106"/>
        <end position="108"/>
    </location>
</feature>
<feature type="modified residue" description="Phosphothreonine" evidence="1">
    <location>
        <position position="106"/>
    </location>
</feature>
<feature type="modified residue" description="Phosphotyrosine" evidence="1">
    <location>
        <position position="108"/>
    </location>
</feature>
<feature type="non-terminal residue">
    <location>
        <position position="1"/>
    </location>
</feature>
<feature type="non-terminal residue">
    <location>
        <position position="278"/>
    </location>
</feature>
<dbReference type="EC" id="2.7.11.24" evidence="2"/>
<dbReference type="EMBL" id="EF158005">
    <property type="protein sequence ID" value="ABN54704.1"/>
    <property type="molecule type" value="Genomic_DNA"/>
</dbReference>
<dbReference type="SMR" id="A3EZ54"/>
<dbReference type="GO" id="GO:0005737">
    <property type="term" value="C:cytoplasm"/>
    <property type="evidence" value="ECO:0007669"/>
    <property type="project" value="UniProtKB-SubCell"/>
</dbReference>
<dbReference type="GO" id="GO:0005634">
    <property type="term" value="C:nucleus"/>
    <property type="evidence" value="ECO:0007669"/>
    <property type="project" value="UniProtKB-SubCell"/>
</dbReference>
<dbReference type="GO" id="GO:0005524">
    <property type="term" value="F:ATP binding"/>
    <property type="evidence" value="ECO:0007669"/>
    <property type="project" value="UniProtKB-KW"/>
</dbReference>
<dbReference type="GO" id="GO:0004707">
    <property type="term" value="F:MAP kinase activity"/>
    <property type="evidence" value="ECO:0007669"/>
    <property type="project" value="UniProtKB-EC"/>
</dbReference>
<dbReference type="GO" id="GO:0106310">
    <property type="term" value="F:protein serine kinase activity"/>
    <property type="evidence" value="ECO:0007669"/>
    <property type="project" value="RHEA"/>
</dbReference>
<dbReference type="FunFam" id="1.10.510.10:FF:000049">
    <property type="entry name" value="Mitogen-activated protein kinase"/>
    <property type="match status" value="1"/>
</dbReference>
<dbReference type="Gene3D" id="3.30.200.20">
    <property type="entry name" value="Phosphorylase Kinase, domain 1"/>
    <property type="match status" value="1"/>
</dbReference>
<dbReference type="Gene3D" id="1.10.510.10">
    <property type="entry name" value="Transferase(Phosphotransferase) domain 1"/>
    <property type="match status" value="1"/>
</dbReference>
<dbReference type="InterPro" id="IPR011009">
    <property type="entry name" value="Kinase-like_dom_sf"/>
</dbReference>
<dbReference type="InterPro" id="IPR050117">
    <property type="entry name" value="MAP_kinase"/>
</dbReference>
<dbReference type="InterPro" id="IPR008352">
    <property type="entry name" value="MAPK_p38-like"/>
</dbReference>
<dbReference type="InterPro" id="IPR000719">
    <property type="entry name" value="Prot_kinase_dom"/>
</dbReference>
<dbReference type="InterPro" id="IPR008271">
    <property type="entry name" value="Ser/Thr_kinase_AS"/>
</dbReference>
<dbReference type="PANTHER" id="PTHR24055">
    <property type="entry name" value="MITOGEN-ACTIVATED PROTEIN KINASE"/>
    <property type="match status" value="1"/>
</dbReference>
<dbReference type="Pfam" id="PF00069">
    <property type="entry name" value="Pkinase"/>
    <property type="match status" value="1"/>
</dbReference>
<dbReference type="PRINTS" id="PR01773">
    <property type="entry name" value="P38MAPKINASE"/>
</dbReference>
<dbReference type="SMART" id="SM00220">
    <property type="entry name" value="S_TKc"/>
    <property type="match status" value="1"/>
</dbReference>
<dbReference type="SUPFAM" id="SSF56112">
    <property type="entry name" value="Protein kinase-like (PK-like)"/>
    <property type="match status" value="1"/>
</dbReference>
<dbReference type="PROSITE" id="PS50011">
    <property type="entry name" value="PROTEIN_KINASE_DOM"/>
    <property type="match status" value="1"/>
</dbReference>
<dbReference type="PROSITE" id="PS00108">
    <property type="entry name" value="PROTEIN_KINASE_ST"/>
    <property type="match status" value="1"/>
</dbReference>